<dbReference type="EMBL" id="AY004174">
    <property type="protein sequence ID" value="AAF85761.1"/>
    <property type="molecule type" value="mRNA"/>
</dbReference>
<dbReference type="EMBL" id="AK018368">
    <property type="protein sequence ID" value="BAB31180.1"/>
    <property type="molecule type" value="mRNA"/>
</dbReference>
<dbReference type="EMBL" id="AK031452">
    <property type="protein sequence ID" value="BAC27412.1"/>
    <property type="molecule type" value="mRNA"/>
</dbReference>
<dbReference type="EMBL" id="AK168881">
    <property type="protein sequence ID" value="BAE40699.1"/>
    <property type="molecule type" value="mRNA"/>
</dbReference>
<dbReference type="EMBL" id="BC034680">
    <property type="protein sequence ID" value="AAH34680.1"/>
    <property type="molecule type" value="mRNA"/>
</dbReference>
<dbReference type="CCDS" id="CCDS37299.1"/>
<dbReference type="RefSeq" id="NP_001345357.1">
    <property type="nucleotide sequence ID" value="NM_001358428.1"/>
</dbReference>
<dbReference type="RefSeq" id="NP_076283.2">
    <property type="nucleotide sequence ID" value="NM_023794.2"/>
</dbReference>
<dbReference type="RefSeq" id="XP_006521720.1">
    <property type="nucleotide sequence ID" value="XM_006521657.3"/>
</dbReference>
<dbReference type="SMR" id="Q9CXC9"/>
<dbReference type="BioGRID" id="222408">
    <property type="interactions" value="1"/>
</dbReference>
<dbReference type="DIP" id="DIP-60467N"/>
<dbReference type="FunCoup" id="Q9CXC9">
    <property type="interactions" value="2031"/>
</dbReference>
<dbReference type="IntAct" id="Q9CXC9">
    <property type="interactions" value="1"/>
</dbReference>
<dbReference type="STRING" id="10090.ENSMUSP00000078551"/>
<dbReference type="GlyGen" id="Q9CXC9">
    <property type="glycosylation" value="1 site"/>
</dbReference>
<dbReference type="iPTMnet" id="Q9CXC9"/>
<dbReference type="PhosphoSitePlus" id="Q9CXC9"/>
<dbReference type="PaxDb" id="10090-ENSMUSP00000078551"/>
<dbReference type="ProteomicsDB" id="275787"/>
<dbReference type="Antibodypedia" id="34851">
    <property type="antibodies" value="356 antibodies from 34 providers"/>
</dbReference>
<dbReference type="DNASU" id="104156"/>
<dbReference type="Ensembl" id="ENSMUST00000079601.13">
    <property type="protein sequence ID" value="ENSMUSP00000078551.7"/>
    <property type="gene ID" value="ENSMUSG00000013089.16"/>
</dbReference>
<dbReference type="GeneID" id="104156"/>
<dbReference type="KEGG" id="mmu:104156"/>
<dbReference type="UCSC" id="uc007yse.1">
    <property type="organism name" value="mouse"/>
</dbReference>
<dbReference type="AGR" id="MGI:1096867"/>
<dbReference type="CTD" id="2119"/>
<dbReference type="MGI" id="MGI:1096867">
    <property type="gene designation" value="Etv5"/>
</dbReference>
<dbReference type="VEuPathDB" id="HostDB:ENSMUSG00000013089"/>
<dbReference type="eggNOG" id="KOG3806">
    <property type="taxonomic scope" value="Eukaryota"/>
</dbReference>
<dbReference type="GeneTree" id="ENSGT00940000160680"/>
<dbReference type="HOGENOM" id="CLU_030025_1_0_1"/>
<dbReference type="InParanoid" id="Q9CXC9"/>
<dbReference type="OMA" id="MIPENQY"/>
<dbReference type="TreeFam" id="TF316214"/>
<dbReference type="BioGRID-ORCS" id="104156">
    <property type="hits" value="5 hits in 79 CRISPR screens"/>
</dbReference>
<dbReference type="ChiTaRS" id="Etv5">
    <property type="organism name" value="mouse"/>
</dbReference>
<dbReference type="PRO" id="PR:Q9CXC9"/>
<dbReference type="Proteomes" id="UP000000589">
    <property type="component" value="Chromosome 16"/>
</dbReference>
<dbReference type="RNAct" id="Q9CXC9">
    <property type="molecule type" value="protein"/>
</dbReference>
<dbReference type="Bgee" id="ENSMUSG00000013089">
    <property type="expression patterns" value="Expressed in embryonic post-anal tail and 176 other cell types or tissues"/>
</dbReference>
<dbReference type="ExpressionAtlas" id="Q9CXC9">
    <property type="expression patterns" value="baseline and differential"/>
</dbReference>
<dbReference type="GO" id="GO:0005654">
    <property type="term" value="C:nucleoplasm"/>
    <property type="evidence" value="ECO:0007669"/>
    <property type="project" value="Ensembl"/>
</dbReference>
<dbReference type="GO" id="GO:0005634">
    <property type="term" value="C:nucleus"/>
    <property type="evidence" value="ECO:0000250"/>
    <property type="project" value="UniProtKB"/>
</dbReference>
<dbReference type="GO" id="GO:0005886">
    <property type="term" value="C:plasma membrane"/>
    <property type="evidence" value="ECO:0007669"/>
    <property type="project" value="GOC"/>
</dbReference>
<dbReference type="GO" id="GO:0045202">
    <property type="term" value="C:synapse"/>
    <property type="evidence" value="ECO:0007669"/>
    <property type="project" value="GOC"/>
</dbReference>
<dbReference type="GO" id="GO:0001228">
    <property type="term" value="F:DNA-binding transcription activator activity, RNA polymerase II-specific"/>
    <property type="evidence" value="ECO:0007669"/>
    <property type="project" value="Ensembl"/>
</dbReference>
<dbReference type="GO" id="GO:0003700">
    <property type="term" value="F:DNA-binding transcription factor activity"/>
    <property type="evidence" value="ECO:0000250"/>
    <property type="project" value="UniProtKB"/>
</dbReference>
<dbReference type="GO" id="GO:0000977">
    <property type="term" value="F:RNA polymerase II transcription regulatory region sequence-specific DNA binding"/>
    <property type="evidence" value="ECO:0007669"/>
    <property type="project" value="Ensembl"/>
</dbReference>
<dbReference type="GO" id="GO:0000976">
    <property type="term" value="F:transcription cis-regulatory region binding"/>
    <property type="evidence" value="ECO:0000250"/>
    <property type="project" value="UniProtKB"/>
</dbReference>
<dbReference type="GO" id="GO:0034599">
    <property type="term" value="P:cellular response to oxidative stress"/>
    <property type="evidence" value="ECO:0000250"/>
    <property type="project" value="UniProtKB"/>
</dbReference>
<dbReference type="GO" id="GO:0007626">
    <property type="term" value="P:locomotory behavior"/>
    <property type="evidence" value="ECO:0000315"/>
    <property type="project" value="MGI"/>
</dbReference>
<dbReference type="GO" id="GO:0048133">
    <property type="term" value="P:male germ-line stem cell asymmetric division"/>
    <property type="evidence" value="ECO:0007669"/>
    <property type="project" value="Ensembl"/>
</dbReference>
<dbReference type="GO" id="GO:0000122">
    <property type="term" value="P:negative regulation of transcription by RNA polymerase II"/>
    <property type="evidence" value="ECO:0007669"/>
    <property type="project" value="Ensembl"/>
</dbReference>
<dbReference type="GO" id="GO:0007274">
    <property type="term" value="P:neuromuscular synaptic transmission"/>
    <property type="evidence" value="ECO:0000315"/>
    <property type="project" value="MGI"/>
</dbReference>
<dbReference type="GO" id="GO:0045893">
    <property type="term" value="P:positive regulation of DNA-templated transcription"/>
    <property type="evidence" value="ECO:0000314"/>
    <property type="project" value="MGI"/>
</dbReference>
<dbReference type="GO" id="GO:0060252">
    <property type="term" value="P:positive regulation of glial cell proliferation"/>
    <property type="evidence" value="ECO:0007669"/>
    <property type="project" value="Ensembl"/>
</dbReference>
<dbReference type="GO" id="GO:0045666">
    <property type="term" value="P:positive regulation of neuron differentiation"/>
    <property type="evidence" value="ECO:0007669"/>
    <property type="project" value="Ensembl"/>
</dbReference>
<dbReference type="GO" id="GO:0060762">
    <property type="term" value="P:regulation of branching involved in mammary gland duct morphogenesis"/>
    <property type="evidence" value="ECO:0000314"/>
    <property type="project" value="MGI"/>
</dbReference>
<dbReference type="GO" id="GO:0050807">
    <property type="term" value="P:regulation of synapse organization"/>
    <property type="evidence" value="ECO:0000315"/>
    <property type="project" value="MGI"/>
</dbReference>
<dbReference type="GO" id="GO:0071340">
    <property type="term" value="P:skeletal muscle acetylcholine-gated channel clustering"/>
    <property type="evidence" value="ECO:0000315"/>
    <property type="project" value="MGI"/>
</dbReference>
<dbReference type="FunFam" id="1.10.10.10:FF:000121">
    <property type="entry name" value="ETS translocation variant 5"/>
    <property type="match status" value="1"/>
</dbReference>
<dbReference type="Gene3D" id="1.10.10.10">
    <property type="entry name" value="Winged helix-like DNA-binding domain superfamily/Winged helix DNA-binding domain"/>
    <property type="match status" value="1"/>
</dbReference>
<dbReference type="InterPro" id="IPR000418">
    <property type="entry name" value="Ets_dom"/>
</dbReference>
<dbReference type="InterPro" id="IPR046328">
    <property type="entry name" value="ETS_fam"/>
</dbReference>
<dbReference type="InterPro" id="IPR006715">
    <property type="entry name" value="ETS_PEA3_N"/>
</dbReference>
<dbReference type="InterPro" id="IPR036388">
    <property type="entry name" value="WH-like_DNA-bd_sf"/>
</dbReference>
<dbReference type="InterPro" id="IPR036390">
    <property type="entry name" value="WH_DNA-bd_sf"/>
</dbReference>
<dbReference type="PANTHER" id="PTHR11849">
    <property type="entry name" value="ETS"/>
    <property type="match status" value="1"/>
</dbReference>
<dbReference type="PANTHER" id="PTHR11849:SF160">
    <property type="entry name" value="ETS TRANSLOCATION VARIANT 5"/>
    <property type="match status" value="1"/>
</dbReference>
<dbReference type="Pfam" id="PF00178">
    <property type="entry name" value="Ets"/>
    <property type="match status" value="1"/>
</dbReference>
<dbReference type="Pfam" id="PF04621">
    <property type="entry name" value="ETS_PEA3_N"/>
    <property type="match status" value="1"/>
</dbReference>
<dbReference type="PRINTS" id="PR00454">
    <property type="entry name" value="ETSDOMAIN"/>
</dbReference>
<dbReference type="SMART" id="SM00413">
    <property type="entry name" value="ETS"/>
    <property type="match status" value="1"/>
</dbReference>
<dbReference type="SUPFAM" id="SSF46785">
    <property type="entry name" value="Winged helix' DNA-binding domain"/>
    <property type="match status" value="1"/>
</dbReference>
<dbReference type="PROSITE" id="PS00345">
    <property type="entry name" value="ETS_DOMAIN_1"/>
    <property type="match status" value="1"/>
</dbReference>
<dbReference type="PROSITE" id="PS00346">
    <property type="entry name" value="ETS_DOMAIN_2"/>
    <property type="match status" value="1"/>
</dbReference>
<dbReference type="PROSITE" id="PS50061">
    <property type="entry name" value="ETS_DOMAIN_3"/>
    <property type="match status" value="1"/>
</dbReference>
<reference key="1">
    <citation type="journal article" date="1997" name="Oncogene">
        <title>Differential expression patterns of the PEA3 group transcription factors through murine embryonic development.</title>
        <authorList>
            <person name="Chotteau-Lelievre A."/>
            <person name="Desbiens X."/>
            <person name="Pelczar H."/>
            <person name="Defossez P.-A."/>
            <person name="de Launoit Y."/>
        </authorList>
    </citation>
    <scope>NUCLEOTIDE SEQUENCE [MRNA]</scope>
    <source>
        <strain>C57BL/6J</strain>
    </source>
</reference>
<reference key="2">
    <citation type="journal article" date="2005" name="Science">
        <title>The transcriptional landscape of the mammalian genome.</title>
        <authorList>
            <person name="Carninci P."/>
            <person name="Kasukawa T."/>
            <person name="Katayama S."/>
            <person name="Gough J."/>
            <person name="Frith M.C."/>
            <person name="Maeda N."/>
            <person name="Oyama R."/>
            <person name="Ravasi T."/>
            <person name="Lenhard B."/>
            <person name="Wells C."/>
            <person name="Kodzius R."/>
            <person name="Shimokawa K."/>
            <person name="Bajic V.B."/>
            <person name="Brenner S.E."/>
            <person name="Batalov S."/>
            <person name="Forrest A.R."/>
            <person name="Zavolan M."/>
            <person name="Davis M.J."/>
            <person name="Wilming L.G."/>
            <person name="Aidinis V."/>
            <person name="Allen J.E."/>
            <person name="Ambesi-Impiombato A."/>
            <person name="Apweiler R."/>
            <person name="Aturaliya R.N."/>
            <person name="Bailey T.L."/>
            <person name="Bansal M."/>
            <person name="Baxter L."/>
            <person name="Beisel K.W."/>
            <person name="Bersano T."/>
            <person name="Bono H."/>
            <person name="Chalk A.M."/>
            <person name="Chiu K.P."/>
            <person name="Choudhary V."/>
            <person name="Christoffels A."/>
            <person name="Clutterbuck D.R."/>
            <person name="Crowe M.L."/>
            <person name="Dalla E."/>
            <person name="Dalrymple B.P."/>
            <person name="de Bono B."/>
            <person name="Della Gatta G."/>
            <person name="di Bernardo D."/>
            <person name="Down T."/>
            <person name="Engstrom P."/>
            <person name="Fagiolini M."/>
            <person name="Faulkner G."/>
            <person name="Fletcher C.F."/>
            <person name="Fukushima T."/>
            <person name="Furuno M."/>
            <person name="Futaki S."/>
            <person name="Gariboldi M."/>
            <person name="Georgii-Hemming P."/>
            <person name="Gingeras T.R."/>
            <person name="Gojobori T."/>
            <person name="Green R.E."/>
            <person name="Gustincich S."/>
            <person name="Harbers M."/>
            <person name="Hayashi Y."/>
            <person name="Hensch T.K."/>
            <person name="Hirokawa N."/>
            <person name="Hill D."/>
            <person name="Huminiecki L."/>
            <person name="Iacono M."/>
            <person name="Ikeo K."/>
            <person name="Iwama A."/>
            <person name="Ishikawa T."/>
            <person name="Jakt M."/>
            <person name="Kanapin A."/>
            <person name="Katoh M."/>
            <person name="Kawasawa Y."/>
            <person name="Kelso J."/>
            <person name="Kitamura H."/>
            <person name="Kitano H."/>
            <person name="Kollias G."/>
            <person name="Krishnan S.P."/>
            <person name="Kruger A."/>
            <person name="Kummerfeld S.K."/>
            <person name="Kurochkin I.V."/>
            <person name="Lareau L.F."/>
            <person name="Lazarevic D."/>
            <person name="Lipovich L."/>
            <person name="Liu J."/>
            <person name="Liuni S."/>
            <person name="McWilliam S."/>
            <person name="Madan Babu M."/>
            <person name="Madera M."/>
            <person name="Marchionni L."/>
            <person name="Matsuda H."/>
            <person name="Matsuzawa S."/>
            <person name="Miki H."/>
            <person name="Mignone F."/>
            <person name="Miyake S."/>
            <person name="Morris K."/>
            <person name="Mottagui-Tabar S."/>
            <person name="Mulder N."/>
            <person name="Nakano N."/>
            <person name="Nakauchi H."/>
            <person name="Ng P."/>
            <person name="Nilsson R."/>
            <person name="Nishiguchi S."/>
            <person name="Nishikawa S."/>
            <person name="Nori F."/>
            <person name="Ohara O."/>
            <person name="Okazaki Y."/>
            <person name="Orlando V."/>
            <person name="Pang K.C."/>
            <person name="Pavan W.J."/>
            <person name="Pavesi G."/>
            <person name="Pesole G."/>
            <person name="Petrovsky N."/>
            <person name="Piazza S."/>
            <person name="Reed J."/>
            <person name="Reid J.F."/>
            <person name="Ring B.Z."/>
            <person name="Ringwald M."/>
            <person name="Rost B."/>
            <person name="Ruan Y."/>
            <person name="Salzberg S.L."/>
            <person name="Sandelin A."/>
            <person name="Schneider C."/>
            <person name="Schoenbach C."/>
            <person name="Sekiguchi K."/>
            <person name="Semple C.A."/>
            <person name="Seno S."/>
            <person name="Sessa L."/>
            <person name="Sheng Y."/>
            <person name="Shibata Y."/>
            <person name="Shimada H."/>
            <person name="Shimada K."/>
            <person name="Silva D."/>
            <person name="Sinclair B."/>
            <person name="Sperling S."/>
            <person name="Stupka E."/>
            <person name="Sugiura K."/>
            <person name="Sultana R."/>
            <person name="Takenaka Y."/>
            <person name="Taki K."/>
            <person name="Tammoja K."/>
            <person name="Tan S.L."/>
            <person name="Tang S."/>
            <person name="Taylor M.S."/>
            <person name="Tegner J."/>
            <person name="Teichmann S.A."/>
            <person name="Ueda H.R."/>
            <person name="van Nimwegen E."/>
            <person name="Verardo R."/>
            <person name="Wei C.L."/>
            <person name="Yagi K."/>
            <person name="Yamanishi H."/>
            <person name="Zabarovsky E."/>
            <person name="Zhu S."/>
            <person name="Zimmer A."/>
            <person name="Hide W."/>
            <person name="Bult C."/>
            <person name="Grimmond S.M."/>
            <person name="Teasdale R.D."/>
            <person name="Liu E.T."/>
            <person name="Brusic V."/>
            <person name="Quackenbush J."/>
            <person name="Wahlestedt C."/>
            <person name="Mattick J.S."/>
            <person name="Hume D.A."/>
            <person name="Kai C."/>
            <person name="Sasaki D."/>
            <person name="Tomaru Y."/>
            <person name="Fukuda S."/>
            <person name="Kanamori-Katayama M."/>
            <person name="Suzuki M."/>
            <person name="Aoki J."/>
            <person name="Arakawa T."/>
            <person name="Iida J."/>
            <person name="Imamura K."/>
            <person name="Itoh M."/>
            <person name="Kato T."/>
            <person name="Kawaji H."/>
            <person name="Kawagashira N."/>
            <person name="Kawashima T."/>
            <person name="Kojima M."/>
            <person name="Kondo S."/>
            <person name="Konno H."/>
            <person name="Nakano K."/>
            <person name="Ninomiya N."/>
            <person name="Nishio T."/>
            <person name="Okada M."/>
            <person name="Plessy C."/>
            <person name="Shibata K."/>
            <person name="Shiraki T."/>
            <person name="Suzuki S."/>
            <person name="Tagami M."/>
            <person name="Waki K."/>
            <person name="Watahiki A."/>
            <person name="Okamura-Oho Y."/>
            <person name="Suzuki H."/>
            <person name="Kawai J."/>
            <person name="Hayashizaki Y."/>
        </authorList>
    </citation>
    <scope>NUCLEOTIDE SEQUENCE [LARGE SCALE MRNA]</scope>
    <source>
        <strain>C57BL/6J</strain>
        <tissue>Kidney</tissue>
        <tissue>Lung</tissue>
        <tissue>Testis</tissue>
    </source>
</reference>
<reference key="3">
    <citation type="journal article" date="2004" name="Genome Res.">
        <title>The status, quality, and expansion of the NIH full-length cDNA project: the Mammalian Gene Collection (MGC).</title>
        <authorList>
            <consortium name="The MGC Project Team"/>
        </authorList>
    </citation>
    <scope>NUCLEOTIDE SEQUENCE [LARGE SCALE MRNA]</scope>
    <source>
        <strain>FVB/N</strain>
        <tissue>Mammary tumor</tissue>
    </source>
</reference>
<reference key="4">
    <citation type="journal article" date="2016" name="PLoS Genet.">
        <title>The Drosophila ETV5 homologue Ets96B: molecular link between obesity and bipolar disorder.</title>
        <authorList>
            <person name="Williams M.J."/>
            <person name="Klockars A."/>
            <person name="Eriksson A."/>
            <person name="Voisin S."/>
            <person name="Dnyansagar R."/>
            <person name="Wiemerslage L."/>
            <person name="Kasagiannis A."/>
            <person name="Akram M."/>
            <person name="Kheder S."/>
            <person name="Ambrosi V."/>
            <person name="Hallqvist E."/>
            <person name="Fredriksson R."/>
            <person name="Schioeth H.B."/>
        </authorList>
    </citation>
    <scope>TISSUE SPECIFICITY</scope>
</reference>
<accession>Q9CXC9</accession>
<accession>Q3TG49</accession>
<accession>Q8C0F3</accession>
<accession>Q9JHB1</accession>
<protein>
    <recommendedName>
        <fullName>ETS translocation variant 5</fullName>
    </recommendedName>
</protein>
<feature type="chain" id="PRO_0000204119" description="ETS translocation variant 5">
    <location>
        <begin position="1"/>
        <end position="510"/>
    </location>
</feature>
<feature type="DNA-binding region" description="ETS" evidence="2">
    <location>
        <begin position="368"/>
        <end position="448"/>
    </location>
</feature>
<feature type="region of interest" description="Disordered" evidence="3">
    <location>
        <begin position="132"/>
        <end position="245"/>
    </location>
</feature>
<feature type="compositionally biased region" description="Low complexity" evidence="3">
    <location>
        <begin position="163"/>
        <end position="174"/>
    </location>
</feature>
<feature type="compositionally biased region" description="Polar residues" evidence="3">
    <location>
        <begin position="211"/>
        <end position="224"/>
    </location>
</feature>
<feature type="modified residue" description="Phosphoserine" evidence="1">
    <location>
        <position position="248"/>
    </location>
</feature>
<feature type="cross-link" description="Glycyl lysine isopeptide (Lys-Gly) (interchain with G-Cter in SUMO2)" evidence="1">
    <location>
        <position position="350"/>
    </location>
</feature>
<feature type="sequence conflict" description="In Ref. 1; AAF85761." evidence="5" ref="1">
    <original>Y</original>
    <variation>F</variation>
    <location>
        <position position="271"/>
    </location>
</feature>
<feature type="sequence conflict" description="In Ref. 1; AAF85761." evidence="5" ref="1">
    <original>A</original>
    <variation>V</variation>
    <location>
        <position position="283"/>
    </location>
</feature>
<feature type="sequence conflict" description="In Ref. 2; BAC27412." evidence="5" ref="2">
    <original>F</original>
    <variation>I</variation>
    <location>
        <position position="396"/>
    </location>
</feature>
<gene>
    <name type="primary">Etv5</name>
</gene>
<sequence length="510" mass="57712">MDGFCDQQVPFMVPGKSRSEDCRGRPLIDRKRKFVDTDLAHDSEELFQDLSQLQEAWLAEAQVPDDEQFVPDFQSDNLVLHAPPPTKIKRELHSPSSELSSCSHEQALGAKYGEKCLYNYCAYDRKPPSGFKPLTPPATPLSPTHQNSLFPPPQATLPTSGLTPGAGPVQGVGPAPTPHSLPEPGSQQQTFAVPRPPHQPLQMPKMMPESQYPSEQRFQRQLSEPSHPFPPQSGVPGDSRPSYHRQMSEPIVPAAPPPLQGFKQEYHDPLYEHGVPGMPGPPAHGFQSPMGIKQEPRDYCADSEVPNCQSSYMRGGYFSSSHEGFPYEKDPRLYFDDTCVVPERLEGKVKQEPTMYREGPPYQRRGSLQLWQFLVTLLDDPANAHFIAWTGRGMEFKLIEPEEVARRWGIQKNRPAMNYDKLSRSLRYYYEKGIMQKVAGERYVYKFVCDPDALFSMAFPDNQRPFLKAESECPLNEEDTLPLTHFEDNPAYLLDMDRCSSLPYTEGFAY</sequence>
<organism>
    <name type="scientific">Mus musculus</name>
    <name type="common">Mouse</name>
    <dbReference type="NCBI Taxonomy" id="10090"/>
    <lineage>
        <taxon>Eukaryota</taxon>
        <taxon>Metazoa</taxon>
        <taxon>Chordata</taxon>
        <taxon>Craniata</taxon>
        <taxon>Vertebrata</taxon>
        <taxon>Euteleostomi</taxon>
        <taxon>Mammalia</taxon>
        <taxon>Eutheria</taxon>
        <taxon>Euarchontoglires</taxon>
        <taxon>Glires</taxon>
        <taxon>Rodentia</taxon>
        <taxon>Myomorpha</taxon>
        <taxon>Muroidea</taxon>
        <taxon>Muridae</taxon>
        <taxon>Murinae</taxon>
        <taxon>Mus</taxon>
        <taxon>Mus</taxon>
    </lineage>
</organism>
<name>ETV5_MOUSE</name>
<proteinExistence type="evidence at transcript level"/>
<comment type="function">
    <text evidence="1">Binds to DNA sequences containing the consensus nucleotide core sequence 5'-GGAA.-3'.</text>
</comment>
<comment type="subunit">
    <text evidence="1">Interacts (via C-terminal) with ZMYM5 (via N-terminal 120 amino acid region).</text>
</comment>
<comment type="subcellular location">
    <subcellularLocation>
        <location evidence="2">Nucleus</location>
    </subcellularLocation>
</comment>
<comment type="tissue specificity">
    <text evidence="4">In the brain, expressed predominantly in the cerebral cortex, the amygdala and the hypothalamus. Within the cerebral cortex, there is conspicuously high expression in cortical layers 2, 4 and 6 while expression is almost absent from layers 1, 3 and 5. High expression is also observed in the dorsal and ventral endopiriform claustrum. Strong expression is observed in limited parts of the amygdala including the basolateral amygdaloid nucleus, the bed stria terminalis and the central amygdaloid nucleus. Low to moderate levels are found in the hypothalamus while expression is almost absent in the thalamus. Hypothalamic expression is seen in the dorsomedial hypothalamic nucleus and also the central, dorsomedial and ventrolateral parts of the ventromedial hypothalamic nucleus. Strong expression is also identified in the nigrostriatal tract. In the mesencephalon, expression is restricted to the ventral tegmental area including the parabrachial pigmented nucleus. In the hippocampus, strongly expressed in the pyramidal cell layer. Some expression is also found in the lacunosum moleculare layer. Low levels of expression in the cerebellum, including the granular, molecular and Purkinje cell layers.</text>
</comment>
<comment type="similarity">
    <text evidence="5">Belongs to the ETS family.</text>
</comment>
<keyword id="KW-0238">DNA-binding</keyword>
<keyword id="KW-1017">Isopeptide bond</keyword>
<keyword id="KW-0539">Nucleus</keyword>
<keyword id="KW-0597">Phosphoprotein</keyword>
<keyword id="KW-1185">Reference proteome</keyword>
<keyword id="KW-0832">Ubl conjugation</keyword>
<evidence type="ECO:0000250" key="1">
    <source>
        <dbReference type="UniProtKB" id="P41161"/>
    </source>
</evidence>
<evidence type="ECO:0000255" key="2">
    <source>
        <dbReference type="PROSITE-ProRule" id="PRU00237"/>
    </source>
</evidence>
<evidence type="ECO:0000256" key="3">
    <source>
        <dbReference type="SAM" id="MobiDB-lite"/>
    </source>
</evidence>
<evidence type="ECO:0000269" key="4">
    <source>
    </source>
</evidence>
<evidence type="ECO:0000305" key="5"/>